<gene>
    <name evidence="4" type="primary">Or5p59</name>
    <name evidence="4" type="synonym">Mor204-12</name>
    <name evidence="4" type="synonym">Olfr483</name>
</gene>
<feature type="chain" id="PRO_0000150841" description="Olfactory receptor 5P59">
    <location>
        <begin position="1"/>
        <end position="315"/>
    </location>
</feature>
<feature type="topological domain" description="Extracellular" evidence="1">
    <location>
        <begin position="1"/>
        <end position="28"/>
    </location>
</feature>
<feature type="transmembrane region" description="Helical; Name=1" evidence="1">
    <location>
        <begin position="29"/>
        <end position="49"/>
    </location>
</feature>
<feature type="topological domain" description="Cytoplasmic" evidence="1">
    <location>
        <begin position="50"/>
        <end position="57"/>
    </location>
</feature>
<feature type="transmembrane region" description="Helical; Name=2" evidence="1">
    <location>
        <begin position="58"/>
        <end position="78"/>
    </location>
</feature>
<feature type="topological domain" description="Extracellular" evidence="1">
    <location>
        <begin position="79"/>
        <end position="102"/>
    </location>
</feature>
<feature type="transmembrane region" description="Helical; Name=3" evidence="1">
    <location>
        <begin position="103"/>
        <end position="123"/>
    </location>
</feature>
<feature type="topological domain" description="Cytoplasmic" evidence="1">
    <location>
        <begin position="124"/>
        <end position="136"/>
    </location>
</feature>
<feature type="transmembrane region" description="Helical; Name=4" evidence="1">
    <location>
        <begin position="137"/>
        <end position="157"/>
    </location>
</feature>
<feature type="topological domain" description="Extracellular" evidence="1">
    <location>
        <begin position="158"/>
        <end position="200"/>
    </location>
</feature>
<feature type="transmembrane region" description="Helical; Name=5" evidence="1">
    <location>
        <begin position="201"/>
        <end position="221"/>
    </location>
</feature>
<feature type="topological domain" description="Cytoplasmic" evidence="1">
    <location>
        <begin position="222"/>
        <end position="241"/>
    </location>
</feature>
<feature type="transmembrane region" description="Helical; Name=6" evidence="1">
    <location>
        <begin position="242"/>
        <end position="262"/>
    </location>
</feature>
<feature type="topological domain" description="Extracellular" evidence="1">
    <location>
        <begin position="263"/>
        <end position="275"/>
    </location>
</feature>
<feature type="transmembrane region" description="Helical; Name=7" evidence="1">
    <location>
        <begin position="276"/>
        <end position="296"/>
    </location>
</feature>
<feature type="topological domain" description="Cytoplasmic" evidence="1">
    <location>
        <begin position="297"/>
        <end position="315"/>
    </location>
</feature>
<feature type="glycosylation site" description="N-linked (GlcNAc...) asparagine" evidence="1">
    <location>
        <position position="8"/>
    </location>
</feature>
<feature type="disulfide bond" evidence="2">
    <location>
        <begin position="100"/>
        <end position="193"/>
    </location>
</feature>
<accession>Q8VG05</accession>
<sequence length="315" mass="34774">MAFLQDGNHTAVTEFILLGLTDDPVLRVVLFTIILCIYLVTVFGNLSTILLIRVSSQLHHPMYFFLSHLASVDIGISSSVTPSMLVNFLLERSTISYLGCGIQLGSADFIASVECFLLAAMAYDRFMAVCNPLLYSTKMSTQVCVQLVVGSYIGGFLNASLIVTVYFFSFLFCGPNRIDHFFCDFAPLAELSCSDVSVSVLIISFSAGSVTMITVFVIVISYSYILITILKMHSTEGRHKAFSTCTSHLTAVTLYYGTITFIYVMPKSSFSTDQNKVVSVFYMVMIPMLNPLIYSLSNNEIKGALKRQLGMKTLS</sequence>
<organism>
    <name type="scientific">Mus musculus</name>
    <name type="common">Mouse</name>
    <dbReference type="NCBI Taxonomy" id="10090"/>
    <lineage>
        <taxon>Eukaryota</taxon>
        <taxon>Metazoa</taxon>
        <taxon>Chordata</taxon>
        <taxon>Craniata</taxon>
        <taxon>Vertebrata</taxon>
        <taxon>Euteleostomi</taxon>
        <taxon>Mammalia</taxon>
        <taxon>Eutheria</taxon>
        <taxon>Euarchontoglires</taxon>
        <taxon>Glires</taxon>
        <taxon>Rodentia</taxon>
        <taxon>Myomorpha</taxon>
        <taxon>Muroidea</taxon>
        <taxon>Muridae</taxon>
        <taxon>Murinae</taxon>
        <taxon>Mus</taxon>
        <taxon>Mus</taxon>
    </lineage>
</organism>
<proteinExistence type="inferred from homology"/>
<reference key="1">
    <citation type="journal article" date="2002" name="Nat. Neurosci.">
        <title>The olfactory receptor gene superfamily of the mouse.</title>
        <authorList>
            <person name="Zhang X."/>
            <person name="Firestein S."/>
        </authorList>
    </citation>
    <scope>NUCLEOTIDE SEQUENCE [GENOMIC DNA]</scope>
</reference>
<reference key="2">
    <citation type="journal article" date="2002" name="Hum. Mol. Genet.">
        <title>Different evolutionary processes shaped the mouse and human olfactory receptor gene families.</title>
        <authorList>
            <person name="Young J.M."/>
            <person name="Friedman C."/>
            <person name="Williams E.M."/>
            <person name="Ross J.A."/>
            <person name="Tonnes-Priddy L."/>
            <person name="Trask B.J."/>
        </authorList>
    </citation>
    <scope>NUCLEOTIDE SEQUENCE [GENOMIC DNA]</scope>
</reference>
<reference key="3">
    <citation type="journal article" date="2002" name="Hum. Mol. Genet.">
        <authorList>
            <person name="Young J.M."/>
            <person name="Friedman C."/>
            <person name="Williams E.M."/>
            <person name="Ross J.A."/>
            <person name="Tonnes-Priddy L."/>
            <person name="Trask B.J."/>
        </authorList>
    </citation>
    <scope>ERRATUM OF PUBMED:11875048</scope>
</reference>
<evidence type="ECO:0000255" key="1"/>
<evidence type="ECO:0000255" key="2">
    <source>
        <dbReference type="PROSITE-ProRule" id="PRU00521"/>
    </source>
</evidence>
<evidence type="ECO:0000305" key="3"/>
<evidence type="ECO:0000312" key="4">
    <source>
        <dbReference type="MGI" id="MGI:3030317"/>
    </source>
</evidence>
<protein>
    <recommendedName>
        <fullName evidence="3">Olfactory receptor 5P59</fullName>
    </recommendedName>
    <alternativeName>
        <fullName>Olfactory receptor 204-12</fullName>
    </alternativeName>
    <alternativeName>
        <fullName>Olfactory receptor 483</fullName>
    </alternativeName>
</protein>
<comment type="function">
    <text>Potential odorant receptor.</text>
</comment>
<comment type="subcellular location">
    <subcellularLocation>
        <location evidence="3">Cell membrane</location>
        <topology evidence="1">Multi-pass membrane protein</topology>
    </subcellularLocation>
</comment>
<comment type="similarity">
    <text evidence="2">Belongs to the G-protein coupled receptor 1 family.</text>
</comment>
<keyword id="KW-1003">Cell membrane</keyword>
<keyword id="KW-1015">Disulfide bond</keyword>
<keyword id="KW-0297">G-protein coupled receptor</keyword>
<keyword id="KW-0325">Glycoprotein</keyword>
<keyword id="KW-0472">Membrane</keyword>
<keyword id="KW-0552">Olfaction</keyword>
<keyword id="KW-0675">Receptor</keyword>
<keyword id="KW-1185">Reference proteome</keyword>
<keyword id="KW-0716">Sensory transduction</keyword>
<keyword id="KW-0807">Transducer</keyword>
<keyword id="KW-0812">Transmembrane</keyword>
<keyword id="KW-1133">Transmembrane helix</keyword>
<name>O5P59_MOUSE</name>
<dbReference type="EMBL" id="AY073360">
    <property type="protein sequence ID" value="AAL61023.1"/>
    <property type="molecule type" value="Genomic_DNA"/>
</dbReference>
<dbReference type="EMBL" id="AY317591">
    <property type="protein sequence ID" value="AAP70987.1"/>
    <property type="molecule type" value="Genomic_DNA"/>
</dbReference>
<dbReference type="CCDS" id="CCDS21705.1"/>
<dbReference type="RefSeq" id="NP_666946.1">
    <property type="nucleotide sequence ID" value="NM_146735.1"/>
</dbReference>
<dbReference type="SMR" id="Q8VG05"/>
<dbReference type="FunCoup" id="Q8VG05">
    <property type="interactions" value="1129"/>
</dbReference>
<dbReference type="STRING" id="10090.ENSMUSP00000150898"/>
<dbReference type="GlyCosmos" id="Q8VG05">
    <property type="glycosylation" value="1 site, No reported glycans"/>
</dbReference>
<dbReference type="GlyGen" id="Q8VG05">
    <property type="glycosylation" value="2 sites"/>
</dbReference>
<dbReference type="PaxDb" id="10090-ENSMUSP00000100517"/>
<dbReference type="DNASU" id="258730"/>
<dbReference type="Ensembl" id="ENSMUST00000104917.4">
    <property type="protein sequence ID" value="ENSMUSP00000100517.2"/>
    <property type="gene ID" value="ENSMUSG00000078118.6"/>
</dbReference>
<dbReference type="Ensembl" id="ENSMUST00000215159.3">
    <property type="protein sequence ID" value="ENSMUSP00000150898.3"/>
    <property type="gene ID" value="ENSMUSG00000078118.6"/>
</dbReference>
<dbReference type="GeneID" id="258730"/>
<dbReference type="KEGG" id="mmu:258730"/>
<dbReference type="UCSC" id="uc009jby.1">
    <property type="organism name" value="mouse"/>
</dbReference>
<dbReference type="AGR" id="MGI:3030317"/>
<dbReference type="CTD" id="258730"/>
<dbReference type="MGI" id="MGI:3030317">
    <property type="gene designation" value="Or5p59"/>
</dbReference>
<dbReference type="VEuPathDB" id="HostDB:ENSMUSG00000078118"/>
<dbReference type="eggNOG" id="ENOG502SKA1">
    <property type="taxonomic scope" value="Eukaryota"/>
</dbReference>
<dbReference type="GeneTree" id="ENSGT01130000278279"/>
<dbReference type="HOGENOM" id="CLU_012526_1_0_1"/>
<dbReference type="InParanoid" id="Q8VG05"/>
<dbReference type="OMA" id="VQINHFF"/>
<dbReference type="OrthoDB" id="9440694at2759"/>
<dbReference type="PhylomeDB" id="Q8VG05"/>
<dbReference type="TreeFam" id="TF338848"/>
<dbReference type="BioGRID-ORCS" id="258730">
    <property type="hits" value="0 hits in 70 CRISPR screens"/>
</dbReference>
<dbReference type="PRO" id="PR:Q8VG05"/>
<dbReference type="Proteomes" id="UP000000589">
    <property type="component" value="Chromosome 7"/>
</dbReference>
<dbReference type="RNAct" id="Q8VG05">
    <property type="molecule type" value="protein"/>
</dbReference>
<dbReference type="ExpressionAtlas" id="Q8VG05">
    <property type="expression patterns" value="baseline and differential"/>
</dbReference>
<dbReference type="GO" id="GO:0016020">
    <property type="term" value="C:membrane"/>
    <property type="evidence" value="ECO:0000247"/>
    <property type="project" value="MGI"/>
</dbReference>
<dbReference type="GO" id="GO:0005886">
    <property type="term" value="C:plasma membrane"/>
    <property type="evidence" value="ECO:0007669"/>
    <property type="project" value="UniProtKB-SubCell"/>
</dbReference>
<dbReference type="GO" id="GO:0004930">
    <property type="term" value="F:G protein-coupled receptor activity"/>
    <property type="evidence" value="ECO:0007669"/>
    <property type="project" value="UniProtKB-KW"/>
</dbReference>
<dbReference type="GO" id="GO:0004984">
    <property type="term" value="F:olfactory receptor activity"/>
    <property type="evidence" value="ECO:0000247"/>
    <property type="project" value="MGI"/>
</dbReference>
<dbReference type="GO" id="GO:0007186">
    <property type="term" value="P:G protein-coupled receptor signaling pathway"/>
    <property type="evidence" value="ECO:0000247"/>
    <property type="project" value="MGI"/>
</dbReference>
<dbReference type="GO" id="GO:0007608">
    <property type="term" value="P:sensory perception of smell"/>
    <property type="evidence" value="ECO:0000247"/>
    <property type="project" value="MGI"/>
</dbReference>
<dbReference type="FunFam" id="1.10.1220.70:FF:000001">
    <property type="entry name" value="Olfactory receptor"/>
    <property type="match status" value="1"/>
</dbReference>
<dbReference type="FunFam" id="1.20.1070.10:FF:000004">
    <property type="entry name" value="Olfactory receptor"/>
    <property type="match status" value="1"/>
</dbReference>
<dbReference type="Gene3D" id="1.20.1070.10">
    <property type="entry name" value="Rhodopsin 7-helix transmembrane proteins"/>
    <property type="match status" value="1"/>
</dbReference>
<dbReference type="InterPro" id="IPR000276">
    <property type="entry name" value="GPCR_Rhodpsn"/>
</dbReference>
<dbReference type="InterPro" id="IPR017452">
    <property type="entry name" value="GPCR_Rhodpsn_7TM"/>
</dbReference>
<dbReference type="InterPro" id="IPR000725">
    <property type="entry name" value="Olfact_rcpt"/>
</dbReference>
<dbReference type="PANTHER" id="PTHR48018">
    <property type="entry name" value="OLFACTORY RECEPTOR"/>
    <property type="match status" value="1"/>
</dbReference>
<dbReference type="Pfam" id="PF13853">
    <property type="entry name" value="7tm_4"/>
    <property type="match status" value="1"/>
</dbReference>
<dbReference type="PRINTS" id="PR00237">
    <property type="entry name" value="GPCRRHODOPSN"/>
</dbReference>
<dbReference type="PRINTS" id="PR00245">
    <property type="entry name" value="OLFACTORYR"/>
</dbReference>
<dbReference type="SUPFAM" id="SSF81321">
    <property type="entry name" value="Family A G protein-coupled receptor-like"/>
    <property type="match status" value="1"/>
</dbReference>
<dbReference type="PROSITE" id="PS00237">
    <property type="entry name" value="G_PROTEIN_RECEP_F1_1"/>
    <property type="match status" value="1"/>
</dbReference>
<dbReference type="PROSITE" id="PS50262">
    <property type="entry name" value="G_PROTEIN_RECEP_F1_2"/>
    <property type="match status" value="1"/>
</dbReference>